<proteinExistence type="inferred from homology"/>
<reference key="1">
    <citation type="journal article" date="2008" name="Genomics">
        <title>Characterization of ST-4821 complex, a unique Neisseria meningitidis clone.</title>
        <authorList>
            <person name="Peng J."/>
            <person name="Yang L."/>
            <person name="Yang F."/>
            <person name="Yang J."/>
            <person name="Yan Y."/>
            <person name="Nie H."/>
            <person name="Zhang X."/>
            <person name="Xiong Z."/>
            <person name="Jiang Y."/>
            <person name="Cheng F."/>
            <person name="Xu X."/>
            <person name="Chen S."/>
            <person name="Sun L."/>
            <person name="Li W."/>
            <person name="Shen Y."/>
            <person name="Shao Z."/>
            <person name="Liang X."/>
            <person name="Xu J."/>
            <person name="Jin Q."/>
        </authorList>
    </citation>
    <scope>NUCLEOTIDE SEQUENCE [LARGE SCALE GENOMIC DNA]</scope>
    <source>
        <strain>053442</strain>
    </source>
</reference>
<comment type="catalytic activity">
    <reaction evidence="1">
        <text>2-(N(omega)-L-arginino)succinate = fumarate + L-arginine</text>
        <dbReference type="Rhea" id="RHEA:24020"/>
        <dbReference type="ChEBI" id="CHEBI:29806"/>
        <dbReference type="ChEBI" id="CHEBI:32682"/>
        <dbReference type="ChEBI" id="CHEBI:57472"/>
        <dbReference type="EC" id="4.3.2.1"/>
    </reaction>
</comment>
<comment type="pathway">
    <text evidence="1">Amino-acid biosynthesis; L-arginine biosynthesis; L-arginine from L-ornithine and carbamoyl phosphate: step 3/3.</text>
</comment>
<comment type="subcellular location">
    <subcellularLocation>
        <location evidence="1">Cytoplasm</location>
    </subcellularLocation>
</comment>
<comment type="similarity">
    <text evidence="1">Belongs to the lyase 1 family. Argininosuccinate lyase subfamily.</text>
</comment>
<dbReference type="EC" id="4.3.2.1" evidence="1"/>
<dbReference type="EMBL" id="CP000381">
    <property type="protein sequence ID" value="ABX72783.1"/>
    <property type="molecule type" value="Genomic_DNA"/>
</dbReference>
<dbReference type="RefSeq" id="WP_002225520.1">
    <property type="nucleotide sequence ID" value="NC_010120.1"/>
</dbReference>
<dbReference type="SMR" id="A9M2R4"/>
<dbReference type="KEGG" id="nmn:NMCC_0585"/>
<dbReference type="HOGENOM" id="CLU_027272_2_3_4"/>
<dbReference type="UniPathway" id="UPA00068">
    <property type="reaction ID" value="UER00114"/>
</dbReference>
<dbReference type="Proteomes" id="UP000001177">
    <property type="component" value="Chromosome"/>
</dbReference>
<dbReference type="GO" id="GO:0005829">
    <property type="term" value="C:cytosol"/>
    <property type="evidence" value="ECO:0007669"/>
    <property type="project" value="TreeGrafter"/>
</dbReference>
<dbReference type="GO" id="GO:0004056">
    <property type="term" value="F:argininosuccinate lyase activity"/>
    <property type="evidence" value="ECO:0007669"/>
    <property type="project" value="UniProtKB-UniRule"/>
</dbReference>
<dbReference type="GO" id="GO:0042450">
    <property type="term" value="P:arginine biosynthetic process via ornithine"/>
    <property type="evidence" value="ECO:0007669"/>
    <property type="project" value="InterPro"/>
</dbReference>
<dbReference type="GO" id="GO:0006526">
    <property type="term" value="P:L-arginine biosynthetic process"/>
    <property type="evidence" value="ECO:0007669"/>
    <property type="project" value="UniProtKB-UniRule"/>
</dbReference>
<dbReference type="CDD" id="cd01359">
    <property type="entry name" value="Argininosuccinate_lyase"/>
    <property type="match status" value="1"/>
</dbReference>
<dbReference type="FunFam" id="1.10.275.10:FF:000002">
    <property type="entry name" value="Argininosuccinate lyase"/>
    <property type="match status" value="1"/>
</dbReference>
<dbReference type="FunFam" id="1.10.40.30:FF:000001">
    <property type="entry name" value="Argininosuccinate lyase"/>
    <property type="match status" value="1"/>
</dbReference>
<dbReference type="FunFam" id="1.20.200.10:FF:000015">
    <property type="entry name" value="argininosuccinate lyase isoform X2"/>
    <property type="match status" value="1"/>
</dbReference>
<dbReference type="Gene3D" id="1.10.40.30">
    <property type="entry name" value="Fumarase/aspartase (C-terminal domain)"/>
    <property type="match status" value="1"/>
</dbReference>
<dbReference type="Gene3D" id="1.20.200.10">
    <property type="entry name" value="Fumarase/aspartase (Central domain)"/>
    <property type="match status" value="1"/>
</dbReference>
<dbReference type="Gene3D" id="1.10.275.10">
    <property type="entry name" value="Fumarase/aspartase (N-terminal domain)"/>
    <property type="match status" value="1"/>
</dbReference>
<dbReference type="HAMAP" id="MF_00006">
    <property type="entry name" value="Arg_succ_lyase"/>
    <property type="match status" value="1"/>
</dbReference>
<dbReference type="InterPro" id="IPR029419">
    <property type="entry name" value="Arg_succ_lyase_C"/>
</dbReference>
<dbReference type="InterPro" id="IPR009049">
    <property type="entry name" value="Argininosuccinate_lyase"/>
</dbReference>
<dbReference type="InterPro" id="IPR024083">
    <property type="entry name" value="Fumarase/histidase_N"/>
</dbReference>
<dbReference type="InterPro" id="IPR020557">
    <property type="entry name" value="Fumarate_lyase_CS"/>
</dbReference>
<dbReference type="InterPro" id="IPR000362">
    <property type="entry name" value="Fumarate_lyase_fam"/>
</dbReference>
<dbReference type="InterPro" id="IPR022761">
    <property type="entry name" value="Fumarate_lyase_N"/>
</dbReference>
<dbReference type="InterPro" id="IPR008948">
    <property type="entry name" value="L-Aspartase-like"/>
</dbReference>
<dbReference type="NCBIfam" id="TIGR00838">
    <property type="entry name" value="argH"/>
    <property type="match status" value="1"/>
</dbReference>
<dbReference type="PANTHER" id="PTHR43814">
    <property type="entry name" value="ARGININOSUCCINATE LYASE"/>
    <property type="match status" value="1"/>
</dbReference>
<dbReference type="PANTHER" id="PTHR43814:SF1">
    <property type="entry name" value="ARGININOSUCCINATE LYASE"/>
    <property type="match status" value="1"/>
</dbReference>
<dbReference type="Pfam" id="PF14698">
    <property type="entry name" value="ASL_C2"/>
    <property type="match status" value="1"/>
</dbReference>
<dbReference type="Pfam" id="PF00206">
    <property type="entry name" value="Lyase_1"/>
    <property type="match status" value="1"/>
</dbReference>
<dbReference type="PRINTS" id="PR00145">
    <property type="entry name" value="ARGSUCLYASE"/>
</dbReference>
<dbReference type="PRINTS" id="PR00149">
    <property type="entry name" value="FUMRATELYASE"/>
</dbReference>
<dbReference type="SUPFAM" id="SSF48557">
    <property type="entry name" value="L-aspartase-like"/>
    <property type="match status" value="1"/>
</dbReference>
<dbReference type="PROSITE" id="PS00163">
    <property type="entry name" value="FUMARATE_LYASES"/>
    <property type="match status" value="1"/>
</dbReference>
<evidence type="ECO:0000255" key="1">
    <source>
        <dbReference type="HAMAP-Rule" id="MF_00006"/>
    </source>
</evidence>
<name>ARLY_NEIM0</name>
<protein>
    <recommendedName>
        <fullName evidence="1">Argininosuccinate lyase</fullName>
        <shortName evidence="1">ASAL</shortName>
        <ecNumber evidence="1">4.3.2.1</ecNumber>
    </recommendedName>
    <alternativeName>
        <fullName evidence="1">Arginosuccinase</fullName>
    </alternativeName>
</protein>
<keyword id="KW-0028">Amino-acid biosynthesis</keyword>
<keyword id="KW-0055">Arginine biosynthesis</keyword>
<keyword id="KW-0963">Cytoplasm</keyword>
<keyword id="KW-0456">Lyase</keyword>
<organism>
    <name type="scientific">Neisseria meningitidis serogroup C (strain 053442)</name>
    <dbReference type="NCBI Taxonomy" id="374833"/>
    <lineage>
        <taxon>Bacteria</taxon>
        <taxon>Pseudomonadati</taxon>
        <taxon>Pseudomonadota</taxon>
        <taxon>Betaproteobacteria</taxon>
        <taxon>Neisseriales</taxon>
        <taxon>Neisseriaceae</taxon>
        <taxon>Neisseria</taxon>
    </lineage>
</organism>
<feature type="chain" id="PRO_1000073851" description="Argininosuccinate lyase">
    <location>
        <begin position="1"/>
        <end position="458"/>
    </location>
</feature>
<sequence>MHDKTWSGRFNEPVSELVKQYTASIGFDRRLAEWDIQGSLAHAQMLKETGVLDEGDLADIRRGMAEILEEIRSGKIEWSSDLEDVHMNIERRLTDKIGDAGKRLHTGRSRNDQVATDIRLWLRDQITVIQSLIQSLQTALLDLAEQNAETVMPGFTHLQVAQPVSFGHHMLAYVEMLGRDNERMADCRCRVNRMPLGAAALAGTTYPIQREITAELLGFEQICQNSLDAVSDRDFAIEFTAAASLVMVHLSRLSEELILWMSPRFGFIDIADRFCTGSSIMPQKKNPDVPELVRGKSGRVIGHLIGLITLMKSQPLAYNKDNQEDKEPLFDTADTLIDTLRIYADMMRGVTVKPDNMRAAVMQGFATATDLADYLVKKGMPFRDAHEVVAQAVRHADQAGVDLSELPLEVLQGFSDLIADDVYGVLTPEGSLNARNHLGGTAPEQVRFQVKRWREMLA</sequence>
<accession>A9M2R4</accession>
<gene>
    <name evidence="1" type="primary">argH</name>
    <name type="ordered locus">NMCC_0585</name>
</gene>